<name>RS8_RHIME</name>
<evidence type="ECO:0000255" key="1">
    <source>
        <dbReference type="HAMAP-Rule" id="MF_01302"/>
    </source>
</evidence>
<evidence type="ECO:0000305" key="2"/>
<dbReference type="EMBL" id="AL591688">
    <property type="protein sequence ID" value="CAC45949.1"/>
    <property type="molecule type" value="Genomic_DNA"/>
</dbReference>
<dbReference type="RefSeq" id="NP_385476.1">
    <property type="nucleotide sequence ID" value="NC_003047.1"/>
</dbReference>
<dbReference type="RefSeq" id="WP_003536517.1">
    <property type="nucleotide sequence ID" value="NC_003047.1"/>
</dbReference>
<dbReference type="SMR" id="Q92QF6"/>
<dbReference type="EnsemblBacteria" id="CAC45949">
    <property type="protein sequence ID" value="CAC45949"/>
    <property type="gene ID" value="SMc01295"/>
</dbReference>
<dbReference type="GeneID" id="89575694"/>
<dbReference type="KEGG" id="sme:SMc01295"/>
<dbReference type="PATRIC" id="fig|266834.11.peg.2786"/>
<dbReference type="eggNOG" id="COG0096">
    <property type="taxonomic scope" value="Bacteria"/>
</dbReference>
<dbReference type="HOGENOM" id="CLU_098428_0_0_5"/>
<dbReference type="OrthoDB" id="9802617at2"/>
<dbReference type="Proteomes" id="UP000001976">
    <property type="component" value="Chromosome"/>
</dbReference>
<dbReference type="GO" id="GO:1990904">
    <property type="term" value="C:ribonucleoprotein complex"/>
    <property type="evidence" value="ECO:0007669"/>
    <property type="project" value="UniProtKB-KW"/>
</dbReference>
<dbReference type="GO" id="GO:0005840">
    <property type="term" value="C:ribosome"/>
    <property type="evidence" value="ECO:0007669"/>
    <property type="project" value="UniProtKB-KW"/>
</dbReference>
<dbReference type="GO" id="GO:0019843">
    <property type="term" value="F:rRNA binding"/>
    <property type="evidence" value="ECO:0007669"/>
    <property type="project" value="UniProtKB-UniRule"/>
</dbReference>
<dbReference type="GO" id="GO:0003735">
    <property type="term" value="F:structural constituent of ribosome"/>
    <property type="evidence" value="ECO:0007669"/>
    <property type="project" value="InterPro"/>
</dbReference>
<dbReference type="GO" id="GO:0006412">
    <property type="term" value="P:translation"/>
    <property type="evidence" value="ECO:0007669"/>
    <property type="project" value="UniProtKB-UniRule"/>
</dbReference>
<dbReference type="FunFam" id="3.30.1370.30:FF:000002">
    <property type="entry name" value="30S ribosomal protein S8"/>
    <property type="match status" value="1"/>
</dbReference>
<dbReference type="FunFam" id="3.30.1490.10:FF:000001">
    <property type="entry name" value="30S ribosomal protein S8"/>
    <property type="match status" value="1"/>
</dbReference>
<dbReference type="Gene3D" id="3.30.1370.30">
    <property type="match status" value="1"/>
</dbReference>
<dbReference type="Gene3D" id="3.30.1490.10">
    <property type="match status" value="1"/>
</dbReference>
<dbReference type="HAMAP" id="MF_01302_B">
    <property type="entry name" value="Ribosomal_uS8_B"/>
    <property type="match status" value="1"/>
</dbReference>
<dbReference type="InterPro" id="IPR000630">
    <property type="entry name" value="Ribosomal_uS8"/>
</dbReference>
<dbReference type="InterPro" id="IPR047863">
    <property type="entry name" value="Ribosomal_uS8_CS"/>
</dbReference>
<dbReference type="InterPro" id="IPR035987">
    <property type="entry name" value="Ribosomal_uS8_sf"/>
</dbReference>
<dbReference type="NCBIfam" id="NF001109">
    <property type="entry name" value="PRK00136.1"/>
    <property type="match status" value="1"/>
</dbReference>
<dbReference type="PANTHER" id="PTHR11758">
    <property type="entry name" value="40S RIBOSOMAL PROTEIN S15A"/>
    <property type="match status" value="1"/>
</dbReference>
<dbReference type="Pfam" id="PF00410">
    <property type="entry name" value="Ribosomal_S8"/>
    <property type="match status" value="1"/>
</dbReference>
<dbReference type="SUPFAM" id="SSF56047">
    <property type="entry name" value="Ribosomal protein S8"/>
    <property type="match status" value="1"/>
</dbReference>
<dbReference type="PROSITE" id="PS00053">
    <property type="entry name" value="RIBOSOMAL_S8"/>
    <property type="match status" value="1"/>
</dbReference>
<accession>Q92QF6</accession>
<proteinExistence type="inferred from homology"/>
<organism>
    <name type="scientific">Rhizobium meliloti (strain 1021)</name>
    <name type="common">Ensifer meliloti</name>
    <name type="synonym">Sinorhizobium meliloti</name>
    <dbReference type="NCBI Taxonomy" id="266834"/>
    <lineage>
        <taxon>Bacteria</taxon>
        <taxon>Pseudomonadati</taxon>
        <taxon>Pseudomonadota</taxon>
        <taxon>Alphaproteobacteria</taxon>
        <taxon>Hyphomicrobiales</taxon>
        <taxon>Rhizobiaceae</taxon>
        <taxon>Sinorhizobium/Ensifer group</taxon>
        <taxon>Sinorhizobium</taxon>
    </lineage>
</organism>
<keyword id="KW-1185">Reference proteome</keyword>
<keyword id="KW-0687">Ribonucleoprotein</keyword>
<keyword id="KW-0689">Ribosomal protein</keyword>
<keyword id="KW-0694">RNA-binding</keyword>
<keyword id="KW-0699">rRNA-binding</keyword>
<protein>
    <recommendedName>
        <fullName evidence="1">Small ribosomal subunit protein uS8</fullName>
    </recommendedName>
    <alternativeName>
        <fullName evidence="2">30S ribosomal protein S8</fullName>
    </alternativeName>
</protein>
<gene>
    <name evidence="1" type="primary">rpsH</name>
    <name type="ordered locus">R01370</name>
    <name type="ORF">SMc01295</name>
</gene>
<comment type="function">
    <text evidence="1">One of the primary rRNA binding proteins, it binds directly to 16S rRNA central domain where it helps coordinate assembly of the platform of the 30S subunit.</text>
</comment>
<comment type="subunit">
    <text evidence="1">Part of the 30S ribosomal subunit. Contacts proteins S5 and S12.</text>
</comment>
<comment type="similarity">
    <text evidence="1">Belongs to the universal ribosomal protein uS8 family.</text>
</comment>
<reference key="1">
    <citation type="journal article" date="2001" name="Proc. Natl. Acad. Sci. U.S.A.">
        <title>Analysis of the chromosome sequence of the legume symbiont Sinorhizobium meliloti strain 1021.</title>
        <authorList>
            <person name="Capela D."/>
            <person name="Barloy-Hubler F."/>
            <person name="Gouzy J."/>
            <person name="Bothe G."/>
            <person name="Ampe F."/>
            <person name="Batut J."/>
            <person name="Boistard P."/>
            <person name="Becker A."/>
            <person name="Boutry M."/>
            <person name="Cadieu E."/>
            <person name="Dreano S."/>
            <person name="Gloux S."/>
            <person name="Godrie T."/>
            <person name="Goffeau A."/>
            <person name="Kahn D."/>
            <person name="Kiss E."/>
            <person name="Lelaure V."/>
            <person name="Masuy D."/>
            <person name="Pohl T."/>
            <person name="Portetelle D."/>
            <person name="Puehler A."/>
            <person name="Purnelle B."/>
            <person name="Ramsperger U."/>
            <person name="Renard C."/>
            <person name="Thebault P."/>
            <person name="Vandenbol M."/>
            <person name="Weidner S."/>
            <person name="Galibert F."/>
        </authorList>
    </citation>
    <scope>NUCLEOTIDE SEQUENCE [LARGE SCALE GENOMIC DNA]</scope>
    <source>
        <strain>1021</strain>
    </source>
</reference>
<reference key="2">
    <citation type="journal article" date="2001" name="Science">
        <title>The composite genome of the legume symbiont Sinorhizobium meliloti.</title>
        <authorList>
            <person name="Galibert F."/>
            <person name="Finan T.M."/>
            <person name="Long S.R."/>
            <person name="Puehler A."/>
            <person name="Abola P."/>
            <person name="Ampe F."/>
            <person name="Barloy-Hubler F."/>
            <person name="Barnett M.J."/>
            <person name="Becker A."/>
            <person name="Boistard P."/>
            <person name="Bothe G."/>
            <person name="Boutry M."/>
            <person name="Bowser L."/>
            <person name="Buhrmester J."/>
            <person name="Cadieu E."/>
            <person name="Capela D."/>
            <person name="Chain P."/>
            <person name="Cowie A."/>
            <person name="Davis R.W."/>
            <person name="Dreano S."/>
            <person name="Federspiel N.A."/>
            <person name="Fisher R.F."/>
            <person name="Gloux S."/>
            <person name="Godrie T."/>
            <person name="Goffeau A."/>
            <person name="Golding B."/>
            <person name="Gouzy J."/>
            <person name="Gurjal M."/>
            <person name="Hernandez-Lucas I."/>
            <person name="Hong A."/>
            <person name="Huizar L."/>
            <person name="Hyman R.W."/>
            <person name="Jones T."/>
            <person name="Kahn D."/>
            <person name="Kahn M.L."/>
            <person name="Kalman S."/>
            <person name="Keating D.H."/>
            <person name="Kiss E."/>
            <person name="Komp C."/>
            <person name="Lelaure V."/>
            <person name="Masuy D."/>
            <person name="Palm C."/>
            <person name="Peck M.C."/>
            <person name="Pohl T.M."/>
            <person name="Portetelle D."/>
            <person name="Purnelle B."/>
            <person name="Ramsperger U."/>
            <person name="Surzycki R."/>
            <person name="Thebault P."/>
            <person name="Vandenbol M."/>
            <person name="Vorhoelter F.J."/>
            <person name="Weidner S."/>
            <person name="Wells D.H."/>
            <person name="Wong K."/>
            <person name="Yeh K.-C."/>
            <person name="Batut J."/>
        </authorList>
    </citation>
    <scope>NUCLEOTIDE SEQUENCE [LARGE SCALE GENOMIC DNA]</scope>
    <source>
        <strain>1021</strain>
    </source>
</reference>
<feature type="chain" id="PRO_0000126471" description="Small ribosomal subunit protein uS8">
    <location>
        <begin position="1"/>
        <end position="132"/>
    </location>
</feature>
<sequence>MAMTDPLGDMLTRIRNGAARRKSSVSTPASKLRARVLDVLQAEGYIRGYSEVEFGNGKAELNIELKYYEGASVIREIARVSKPGRRVYVSVKSIPQVANGLGITILSTPKGVMADHQAREQNVGGEVLCSIF</sequence>